<proteinExistence type="inferred from homology"/>
<comment type="function">
    <text evidence="1 2">Core histone-binding subunit that may target chromatin assembly factors, chromatin remodeling factors and histone deacetylases to their histone substrates in a manner that is regulated by nucleosomal DNA. Required for hcp-3 and his-1 stabilization, localization of hcp-3 to centromeres and for proper chromosome segregation. Synthetic multivulva class B (synMuvB) protein. SynMuvB proteins are required to repress the induction of vulval development by Ras signaling and probably act by forming the multiprotein DRM complex that represses transcription.</text>
</comment>
<comment type="subunit">
    <text evidence="1 2">Binds directly to helix 1 of the histone fold of histone H4, a region that is not accessible when H4 is in chromatin. Probable component of a NuRD-like complex, composed of at least lin-53 and hda-1. Interacts with lin-35. Interacts with hda-1; the interaction is direct. Component of the DRM complex, at least composed of lin-9, lin-35, lin-37, lin-52, lin-53, lin-54- dpl-1 and efl-1. Interacts with hcp-3.</text>
</comment>
<comment type="subcellular location">
    <subcellularLocation>
        <location evidence="1">Nucleus</location>
    </subcellularLocation>
    <subcellularLocation>
        <location evidence="1">Chromosome</location>
        <location evidence="1">Centromere</location>
    </subcellularLocation>
    <text evidence="1">Localizes to centromeres during metaphase. Requires hcp-3 and knl-2 for nuclear and centromere localization.</text>
</comment>
<comment type="similarity">
    <text evidence="3">Belongs to the WD repeat RBAP46/RBAP48/MSI1 family.</text>
</comment>
<keyword id="KW-0137">Centromere</keyword>
<keyword id="KW-0156">Chromatin regulator</keyword>
<keyword id="KW-0158">Chromosome</keyword>
<keyword id="KW-0217">Developmental protein</keyword>
<keyword id="KW-0539">Nucleus</keyword>
<keyword id="KW-1185">Reference proteome</keyword>
<keyword id="KW-0677">Repeat</keyword>
<keyword id="KW-0678">Repressor</keyword>
<keyword id="KW-0804">Transcription</keyword>
<keyword id="KW-0805">Transcription regulation</keyword>
<keyword id="KW-0853">WD repeat</keyword>
<name>LIN53_CAEBR</name>
<sequence>MATIEDGTSEDRVANDEYKIWKKNTPFLYDLVMTHALEWPSLSVQWLPEIEKESSDHTVHRLILGTHTSDEQNHLLISKICMPTDEAQFDASRYDTERGEFGGFGAVNGKVEPDIRINHEGEVNRARYMPQKPTIIATKSPSADVYIFDYTKYPSVPKDNTFNPLLKLKGHTKEGYGLSWNPNKEGLILSASDDQTVCHWDINGNAGANGELKAREIFKGHESVVEDVAWHVLHDGVFGSVGDDKKLLIWDLRTNVPGHAIDAHSAEVNCLAFNPYSEFILATGSADKTVALWDLRNLRLKLHSFESHRDEIFQVQWSPHNETILASSGTDKRLHVWDLSKIGEDQTAEDAEDGPPELLFIHGGHTAKISDFSWNPNEPWVVCSVSEDNILQVWQMADNIYNDVEDETPADMVERS</sequence>
<accession>Q61Y48</accession>
<accession>A8WWI6</accession>
<dbReference type="EMBL" id="HE600990">
    <property type="protein sequence ID" value="CAP24558.3"/>
    <property type="molecule type" value="Genomic_DNA"/>
</dbReference>
<dbReference type="SMR" id="Q61Y48"/>
<dbReference type="FunCoup" id="Q61Y48">
    <property type="interactions" value="2981"/>
</dbReference>
<dbReference type="STRING" id="6238.Q61Y48"/>
<dbReference type="EnsemblMetazoa" id="CBG03710.1">
    <property type="protein sequence ID" value="CBG03710.1"/>
    <property type="gene ID" value="WBGene00026512"/>
</dbReference>
<dbReference type="WormBase" id="CBG03710">
    <property type="protein sequence ID" value="CBP37586"/>
    <property type="gene ID" value="WBGene00026512"/>
    <property type="gene designation" value="Cbr-lin-53"/>
</dbReference>
<dbReference type="eggNOG" id="KOG0264">
    <property type="taxonomic scope" value="Eukaryota"/>
</dbReference>
<dbReference type="HOGENOM" id="CLU_020445_3_1_1"/>
<dbReference type="InParanoid" id="Q61Y48"/>
<dbReference type="OMA" id="PHEEGCL"/>
<dbReference type="OrthoDB" id="427795at2759"/>
<dbReference type="Proteomes" id="UP000008549">
    <property type="component" value="Unassembled WGS sequence"/>
</dbReference>
<dbReference type="GO" id="GO:0000775">
    <property type="term" value="C:chromosome, centromeric region"/>
    <property type="evidence" value="ECO:0007669"/>
    <property type="project" value="UniProtKB-SubCell"/>
</dbReference>
<dbReference type="GO" id="GO:0070176">
    <property type="term" value="C:DRM complex"/>
    <property type="evidence" value="ECO:0007669"/>
    <property type="project" value="EnsemblMetazoa"/>
</dbReference>
<dbReference type="GO" id="GO:0035098">
    <property type="term" value="C:ESC/E(Z) complex"/>
    <property type="evidence" value="ECO:0000318"/>
    <property type="project" value="GO_Central"/>
</dbReference>
<dbReference type="GO" id="GO:0005634">
    <property type="term" value="C:nucleus"/>
    <property type="evidence" value="ECO:0000250"/>
    <property type="project" value="UniProtKB"/>
</dbReference>
<dbReference type="GO" id="GO:0016581">
    <property type="term" value="C:NuRD complex"/>
    <property type="evidence" value="ECO:0000318"/>
    <property type="project" value="GO_Central"/>
</dbReference>
<dbReference type="GO" id="GO:0017053">
    <property type="term" value="C:transcription repressor complex"/>
    <property type="evidence" value="ECO:0000250"/>
    <property type="project" value="UniProtKB"/>
</dbReference>
<dbReference type="GO" id="GO:0042393">
    <property type="term" value="F:histone binding"/>
    <property type="evidence" value="ECO:0000318"/>
    <property type="project" value="GO_Central"/>
</dbReference>
<dbReference type="GO" id="GO:0042826">
    <property type="term" value="F:histone deacetylase binding"/>
    <property type="evidence" value="ECO:0000250"/>
    <property type="project" value="UniProtKB"/>
</dbReference>
<dbReference type="GO" id="GO:0001708">
    <property type="term" value="P:cell fate specification"/>
    <property type="evidence" value="ECO:0007669"/>
    <property type="project" value="EnsemblMetazoa"/>
</dbReference>
<dbReference type="GO" id="GO:0006338">
    <property type="term" value="P:chromatin remodeling"/>
    <property type="evidence" value="ECO:0000318"/>
    <property type="project" value="GO_Central"/>
</dbReference>
<dbReference type="GO" id="GO:0009792">
    <property type="term" value="P:embryo development ending in birth or egg hatching"/>
    <property type="evidence" value="ECO:0000250"/>
    <property type="project" value="UniProtKB"/>
</dbReference>
<dbReference type="GO" id="GO:0048557">
    <property type="term" value="P:embryonic digestive tract morphogenesis"/>
    <property type="evidence" value="ECO:0007669"/>
    <property type="project" value="EnsemblMetazoa"/>
</dbReference>
<dbReference type="GO" id="GO:0034514">
    <property type="term" value="P:mitochondrial unfolded protein response"/>
    <property type="evidence" value="ECO:0007669"/>
    <property type="project" value="EnsemblMetazoa"/>
</dbReference>
<dbReference type="GO" id="GO:0040027">
    <property type="term" value="P:negative regulation of vulval development"/>
    <property type="evidence" value="ECO:0007669"/>
    <property type="project" value="EnsemblMetazoa"/>
</dbReference>
<dbReference type="GO" id="GO:0045138">
    <property type="term" value="P:nematode male tail tip morphogenesis"/>
    <property type="evidence" value="ECO:0007669"/>
    <property type="project" value="EnsemblMetazoa"/>
</dbReference>
<dbReference type="GO" id="GO:0006355">
    <property type="term" value="P:regulation of DNA-templated transcription"/>
    <property type="evidence" value="ECO:0000318"/>
    <property type="project" value="GO_Central"/>
</dbReference>
<dbReference type="CDD" id="cd00200">
    <property type="entry name" value="WD40"/>
    <property type="match status" value="1"/>
</dbReference>
<dbReference type="FunFam" id="2.130.10.10:FF:000021">
    <property type="entry name" value="histone-binding protein RBBP4 isoform X1"/>
    <property type="match status" value="1"/>
</dbReference>
<dbReference type="Gene3D" id="2.130.10.10">
    <property type="entry name" value="YVTN repeat-like/Quinoprotein amine dehydrogenase"/>
    <property type="match status" value="1"/>
</dbReference>
<dbReference type="InterPro" id="IPR020472">
    <property type="entry name" value="G-protein_beta_WD-40_rep"/>
</dbReference>
<dbReference type="InterPro" id="IPR022052">
    <property type="entry name" value="Histone-bd_RBBP4-like_N"/>
</dbReference>
<dbReference type="InterPro" id="IPR015943">
    <property type="entry name" value="WD40/YVTN_repeat-like_dom_sf"/>
</dbReference>
<dbReference type="InterPro" id="IPR019775">
    <property type="entry name" value="WD40_repeat_CS"/>
</dbReference>
<dbReference type="InterPro" id="IPR036322">
    <property type="entry name" value="WD40_repeat_dom_sf"/>
</dbReference>
<dbReference type="InterPro" id="IPR001680">
    <property type="entry name" value="WD40_rpt"/>
</dbReference>
<dbReference type="InterPro" id="IPR050459">
    <property type="entry name" value="WD_repeat_RBAP46/RBAP48/MSI1"/>
</dbReference>
<dbReference type="PANTHER" id="PTHR22850">
    <property type="entry name" value="WD40 REPEAT FAMILY"/>
    <property type="match status" value="1"/>
</dbReference>
<dbReference type="Pfam" id="PF12265">
    <property type="entry name" value="CAF1C_H4-bd"/>
    <property type="match status" value="1"/>
</dbReference>
<dbReference type="Pfam" id="PF00400">
    <property type="entry name" value="WD40"/>
    <property type="match status" value="5"/>
</dbReference>
<dbReference type="PRINTS" id="PR00320">
    <property type="entry name" value="GPROTEINBRPT"/>
</dbReference>
<dbReference type="SMART" id="SM00320">
    <property type="entry name" value="WD40"/>
    <property type="match status" value="6"/>
</dbReference>
<dbReference type="SUPFAM" id="SSF50978">
    <property type="entry name" value="WD40 repeat-like"/>
    <property type="match status" value="1"/>
</dbReference>
<dbReference type="PROSITE" id="PS00678">
    <property type="entry name" value="WD_REPEATS_1"/>
    <property type="match status" value="2"/>
</dbReference>
<dbReference type="PROSITE" id="PS50082">
    <property type="entry name" value="WD_REPEATS_2"/>
    <property type="match status" value="5"/>
</dbReference>
<dbReference type="PROSITE" id="PS50294">
    <property type="entry name" value="WD_REPEATS_REGION"/>
    <property type="match status" value="1"/>
</dbReference>
<organism>
    <name type="scientific">Caenorhabditis briggsae</name>
    <dbReference type="NCBI Taxonomy" id="6238"/>
    <lineage>
        <taxon>Eukaryota</taxon>
        <taxon>Metazoa</taxon>
        <taxon>Ecdysozoa</taxon>
        <taxon>Nematoda</taxon>
        <taxon>Chromadorea</taxon>
        <taxon>Rhabditida</taxon>
        <taxon>Rhabditina</taxon>
        <taxon>Rhabditomorpha</taxon>
        <taxon>Rhabditoidea</taxon>
        <taxon>Rhabditidae</taxon>
        <taxon>Peloderinae</taxon>
        <taxon>Caenorhabditis</taxon>
    </lineage>
</organism>
<reference key="1">
    <citation type="journal article" date="2003" name="PLoS Biol.">
        <title>The genome sequence of Caenorhabditis briggsae: a platform for comparative genomics.</title>
        <authorList>
            <person name="Stein L.D."/>
            <person name="Bao Z."/>
            <person name="Blasiar D."/>
            <person name="Blumenthal T."/>
            <person name="Brent M.R."/>
            <person name="Chen N."/>
            <person name="Chinwalla A."/>
            <person name="Clarke L."/>
            <person name="Clee C."/>
            <person name="Coghlan A."/>
            <person name="Coulson A."/>
            <person name="D'Eustachio P."/>
            <person name="Fitch D.H.A."/>
            <person name="Fulton L.A."/>
            <person name="Fulton R.E."/>
            <person name="Griffiths-Jones S."/>
            <person name="Harris T.W."/>
            <person name="Hillier L.W."/>
            <person name="Kamath R."/>
            <person name="Kuwabara P.E."/>
            <person name="Mardis E.R."/>
            <person name="Marra M.A."/>
            <person name="Miner T.L."/>
            <person name="Minx P."/>
            <person name="Mullikin J.C."/>
            <person name="Plumb R.W."/>
            <person name="Rogers J."/>
            <person name="Schein J.E."/>
            <person name="Sohrmann M."/>
            <person name="Spieth J."/>
            <person name="Stajich J.E."/>
            <person name="Wei C."/>
            <person name="Willey D."/>
            <person name="Wilson R.K."/>
            <person name="Durbin R.M."/>
            <person name="Waterston R.H."/>
        </authorList>
    </citation>
    <scope>NUCLEOTIDE SEQUENCE [LARGE SCALE GENOMIC DNA]</scope>
    <source>
        <strain>AF16</strain>
    </source>
</reference>
<feature type="chain" id="PRO_0000312665" description="Probable histone-binding protein lin-53">
    <location>
        <begin position="1"/>
        <end position="416"/>
    </location>
</feature>
<feature type="repeat" description="WD 1" evidence="3">
    <location>
        <begin position="118"/>
        <end position="158"/>
    </location>
</feature>
<feature type="repeat" description="WD 2" evidence="3">
    <location>
        <begin position="170"/>
        <end position="210"/>
    </location>
</feature>
<feature type="repeat" description="WD 3" evidence="3">
    <location>
        <begin position="220"/>
        <end position="260"/>
    </location>
</feature>
<feature type="repeat" description="WD 4" evidence="3">
    <location>
        <begin position="263"/>
        <end position="303"/>
    </location>
</feature>
<feature type="repeat" description="WD 5" evidence="3">
    <location>
        <begin position="307"/>
        <end position="347"/>
    </location>
</feature>
<feature type="repeat" description="WD 6" evidence="3">
    <location>
        <begin position="364"/>
        <end position="404"/>
    </location>
</feature>
<protein>
    <recommendedName>
        <fullName>Probable histone-binding protein lin-53</fullName>
    </recommendedName>
</protein>
<gene>
    <name evidence="1" type="primary">lin-53</name>
    <name type="ORF">CBG03710</name>
</gene>
<evidence type="ECO:0000250" key="1">
    <source>
        <dbReference type="UniProtKB" id="P90916"/>
    </source>
</evidence>
<evidence type="ECO:0000250" key="2">
    <source>
        <dbReference type="UniProtKB" id="Q24572"/>
    </source>
</evidence>
<evidence type="ECO:0000255" key="3"/>